<dbReference type="EMBL" id="M96354">
    <property type="protein sequence ID" value="AAA02818.1"/>
    <property type="molecule type" value="Genomic_DNA"/>
</dbReference>
<dbReference type="EMBL" id="U18466">
    <property type="protein sequence ID" value="AAA65322.1"/>
    <property type="molecule type" value="Genomic_DNA"/>
</dbReference>
<dbReference type="RefSeq" id="NP_042786.1">
    <property type="nucleotide sequence ID" value="NC_001659.2"/>
</dbReference>
<dbReference type="SMR" id="P34204"/>
<dbReference type="GeneID" id="22220322"/>
<dbReference type="KEGG" id="vg:22220322"/>
<dbReference type="Proteomes" id="UP000000624">
    <property type="component" value="Segment"/>
</dbReference>
<dbReference type="GO" id="GO:0030430">
    <property type="term" value="C:host cell cytoplasm"/>
    <property type="evidence" value="ECO:0007669"/>
    <property type="project" value="UniProtKB-SubCell"/>
</dbReference>
<dbReference type="GO" id="GO:0042025">
    <property type="term" value="C:host cell nucleus"/>
    <property type="evidence" value="ECO:0007669"/>
    <property type="project" value="UniProtKB-SubCell"/>
</dbReference>
<dbReference type="GO" id="GO:0044423">
    <property type="term" value="C:virion component"/>
    <property type="evidence" value="ECO:0007669"/>
    <property type="project" value="UniProtKB-KW"/>
</dbReference>
<dbReference type="GO" id="GO:0075509">
    <property type="term" value="P:endocytosis involved in viral entry into host cell"/>
    <property type="evidence" value="ECO:0007669"/>
    <property type="project" value="UniProtKB-KW"/>
</dbReference>
<feature type="chain" id="PRO_0000221960" description="Phosphoprotein p30">
    <location>
        <begin position="1"/>
        <end position="204"/>
    </location>
</feature>
<feature type="splice variant" id="VSP_061331" description="In isoform 2." evidence="3">
    <location>
        <begin position="1"/>
        <end position="8"/>
    </location>
</feature>
<accession>P34204</accession>
<reference key="1">
    <citation type="journal article" date="1993" name="J. Virol.">
        <title>Sequence and characterization of the major early phosphoprotein p32 of African swine fever virus.</title>
        <authorList>
            <person name="Prados F.J."/>
            <person name="Vinuela E."/>
            <person name="Alcami A."/>
        </authorList>
    </citation>
    <scope>NUCLEOTIDE SEQUENCE [GENOMIC DNA]</scope>
    <scope>PHOSPHORYLATION</scope>
    <scope>SUBCELLULAR LOCATION</scope>
</reference>
<reference key="2">
    <citation type="journal article" date="1995" name="Virology">
        <title>Analysis of the complete nucleotide sequence of African swine fever virus.</title>
        <authorList>
            <person name="Yanez R.J."/>
            <person name="Rodriguez J.M."/>
            <person name="Nogal M.L."/>
            <person name="Yuste L."/>
            <person name="Enriquez C."/>
            <person name="Rodriguez J.F."/>
            <person name="Vinuela E."/>
        </authorList>
    </citation>
    <scope>NUCLEOTIDE SEQUENCE [LARGE SCALE GENOMIC DNA]</scope>
</reference>
<reference key="3">
    <citation type="journal article" date="1998" name="Virology">
        <title>The African swine fever virus proteins p54 and p30 are involved in two distinct steps of virus attachment and both contribute to the antibody-mediated protective immune response.</title>
        <authorList>
            <person name="Gomez-Puertas P."/>
            <person name="Rodriguez F."/>
            <person name="Oviedo J.M."/>
            <person name="Brun A."/>
            <person name="Alonso C."/>
            <person name="Escribano J.M."/>
        </authorList>
    </citation>
    <scope>FUNCTION</scope>
</reference>
<reference key="4">
    <citation type="journal article" date="2008" name="FEBS Lett.">
        <title>African swine fever virus protein p30 interaction with heterogeneous nuclear ribonucleoprotein K (hnRNP-K) during infection.</title>
        <authorList>
            <person name="Hernaez B."/>
            <person name="Escribano J.M."/>
            <person name="Alonso C."/>
        </authorList>
    </citation>
    <scope>INTERACTION WITH HUMAN HNRNPK</scope>
    <scope>FUNCTION</scope>
    <scope>SUBCELLULAR LOCATION</scope>
</reference>
<reference key="5">
    <citation type="journal article" date="2018" name="J. Virol.">
        <title>A Proteomic Atlas of the African Swine Fever Virus Particle.</title>
        <authorList>
            <person name="Alejo A."/>
            <person name="Matamoros T."/>
            <person name="Guerra M."/>
            <person name="Andres G."/>
        </authorList>
    </citation>
    <scope>SUBCELLULAR LOCATION</scope>
</reference>
<reference key="6">
    <citation type="journal article" date="2020" name="J. Virol.">
        <title>The African Swine Fever Virus Transcriptome.</title>
        <authorList>
            <person name="Cackett G."/>
            <person name="Matelska D."/>
            <person name="Sykora M."/>
            <person name="Portugal R."/>
            <person name="Malecki M."/>
            <person name="Baehler J."/>
            <person name="Dixon L."/>
            <person name="Werner F."/>
        </authorList>
    </citation>
    <scope>INDUCTION</scope>
    <scope>ALTERNATIVE INITIATION</scope>
</reference>
<sequence length="204" mass="23555">MDFILNISMKMEVIFKTDLRSSSQVVFHAGSLYNWFSVEIINSGRIVTTAIKTLLSTVKYDIVKSAHIYAGQGYTEHQAQEEWNMILHVLFEEETESSASSESIHEKNDNETNECTSSFETLFEQEPSSEEPKDSKLYMLAQKTVQHIEQYGKAPDFNKVIRAHNFIQTIHGTPLKEEEKEVVRLMVIKLLKKNKLLSHLHLMF</sequence>
<organism>
    <name type="scientific">African swine fever virus (strain Badajoz 1971 Vero-adapted)</name>
    <name type="common">Ba71V</name>
    <name type="synonym">ASFV</name>
    <dbReference type="NCBI Taxonomy" id="10498"/>
    <lineage>
        <taxon>Viruses</taxon>
        <taxon>Varidnaviria</taxon>
        <taxon>Bamfordvirae</taxon>
        <taxon>Nucleocytoviricota</taxon>
        <taxon>Pokkesviricetes</taxon>
        <taxon>Asfuvirales</taxon>
        <taxon>Asfarviridae</taxon>
        <taxon>Asfivirus</taxon>
        <taxon>African swine fever virus</taxon>
    </lineage>
</organism>
<gene>
    <name type="ordered locus">Ba71V-93</name>
    <name type="ORF">CP204L</name>
</gene>
<keyword id="KW-0024">Alternative initiation</keyword>
<keyword id="KW-0244">Early protein</keyword>
<keyword id="KW-1035">Host cytoplasm</keyword>
<keyword id="KW-1048">Host nucleus</keyword>
<keyword id="KW-0945">Host-virus interaction</keyword>
<keyword id="KW-0597">Phosphoprotein</keyword>
<keyword id="KW-1185">Reference proteome</keyword>
<keyword id="KW-1162">Viral penetration into host cytoplasm</keyword>
<keyword id="KW-0946">Virion</keyword>
<keyword id="KW-1164">Virus endocytosis by host</keyword>
<keyword id="KW-1160">Virus entry into host cell</keyword>
<comment type="function">
    <text evidence="1 5">Modifies the subcellular distribution of heterogeneous nuclear ribonucleoprotein K (HNRNPK) and may contribute to modulate HNRNPK functions related to processing and export of mRNAs during ASFV infection (PubMed:18775702). Necessary for virus internalization (PubMed:9568043).</text>
</comment>
<comment type="subunit">
    <text evidence="1">Oligomer. Interacts with host HNRNPK.</text>
</comment>
<comment type="subcellular location">
    <subcellularLocation>
        <location evidence="4">Host cytoplasm</location>
    </subcellularLocation>
    <subcellularLocation>
        <location evidence="1 4">Host nucleus</location>
    </subcellularLocation>
    <subcellularLocation>
        <location evidence="2">Virion</location>
    </subcellularLocation>
</comment>
<comment type="alternative products">
    <event type="alternative initiation"/>
    <isoform>
        <id>P34204-1</id>
        <name>1</name>
        <sequence type="displayed"/>
    </isoform>
    <isoform>
        <id>P34204-2</id>
        <name>2</name>
        <sequence type="described" ref="VSP_061331"/>
    </isoform>
</comment>
<comment type="induction">
    <text evidence="3">Expressed in the early phase of the viral replicative cycle.</text>
</comment>
<comment type="PTM">
    <text evidence="4">Phosphorylated on serine residues in the 115 N-terminal amino acids.</text>
</comment>
<comment type="similarity">
    <text evidence="6">Belongs to the asfivirus phosphoprotein p30 family.</text>
</comment>
<name>P30_ASFB7</name>
<organismHost>
    <name type="scientific">Ornithodoros</name>
    <name type="common">relapsing fever ticks</name>
    <dbReference type="NCBI Taxonomy" id="6937"/>
</organismHost>
<organismHost>
    <name type="scientific">Sus scrofa</name>
    <name type="common">Pig</name>
    <dbReference type="NCBI Taxonomy" id="9823"/>
</organismHost>
<protein>
    <recommendedName>
        <fullName>Phosphoprotein p30</fullName>
        <shortName>p30</shortName>
    </recommendedName>
    <alternativeName>
        <fullName>Phosphoprotein p32</fullName>
        <shortName>p32</shortName>
    </alternativeName>
</protein>
<evidence type="ECO:0000269" key="1">
    <source>
    </source>
</evidence>
<evidence type="ECO:0000269" key="2">
    <source>
    </source>
</evidence>
<evidence type="ECO:0000269" key="3">
    <source>
    </source>
</evidence>
<evidence type="ECO:0000269" key="4">
    <source>
    </source>
</evidence>
<evidence type="ECO:0000269" key="5">
    <source>
    </source>
</evidence>
<evidence type="ECO:0000305" key="6"/>
<proteinExistence type="evidence at protein level"/>